<name>PYRR_STRPB</name>
<protein>
    <recommendedName>
        <fullName evidence="1">Bifunctional protein PyrR</fullName>
    </recommendedName>
    <domain>
        <recommendedName>
            <fullName evidence="1">Pyrimidine operon regulatory protein</fullName>
        </recommendedName>
    </domain>
    <domain>
        <recommendedName>
            <fullName evidence="1">Uracil phosphoribosyltransferase</fullName>
            <shortName evidence="1">UPRTase</shortName>
            <ecNumber evidence="1">2.4.2.9</ecNumber>
        </recommendedName>
    </domain>
</protein>
<dbReference type="EC" id="2.4.2.9" evidence="1"/>
<dbReference type="EMBL" id="CP000261">
    <property type="protein sequence ID" value="ABF35758.1"/>
    <property type="molecule type" value="Genomic_DNA"/>
</dbReference>
<dbReference type="SMR" id="Q1JCF0"/>
<dbReference type="KEGG" id="spj:MGAS2096_Spy0706"/>
<dbReference type="HOGENOM" id="CLU_094234_2_1_9"/>
<dbReference type="GO" id="GO:0003723">
    <property type="term" value="F:RNA binding"/>
    <property type="evidence" value="ECO:0007669"/>
    <property type="project" value="UniProtKB-UniRule"/>
</dbReference>
<dbReference type="GO" id="GO:0004845">
    <property type="term" value="F:uracil phosphoribosyltransferase activity"/>
    <property type="evidence" value="ECO:0007669"/>
    <property type="project" value="UniProtKB-UniRule"/>
</dbReference>
<dbReference type="GO" id="GO:0006353">
    <property type="term" value="P:DNA-templated transcription termination"/>
    <property type="evidence" value="ECO:0007669"/>
    <property type="project" value="UniProtKB-UniRule"/>
</dbReference>
<dbReference type="CDD" id="cd06223">
    <property type="entry name" value="PRTases_typeI"/>
    <property type="match status" value="1"/>
</dbReference>
<dbReference type="FunFam" id="3.40.50.2020:FF:000020">
    <property type="entry name" value="Bifunctional protein PyrR"/>
    <property type="match status" value="1"/>
</dbReference>
<dbReference type="Gene3D" id="3.40.50.2020">
    <property type="match status" value="1"/>
</dbReference>
<dbReference type="HAMAP" id="MF_01219">
    <property type="entry name" value="PyrR"/>
    <property type="match status" value="1"/>
</dbReference>
<dbReference type="InterPro" id="IPR000836">
    <property type="entry name" value="PRibTrfase_dom"/>
</dbReference>
<dbReference type="InterPro" id="IPR029057">
    <property type="entry name" value="PRTase-like"/>
</dbReference>
<dbReference type="InterPro" id="IPR023050">
    <property type="entry name" value="PyrR"/>
</dbReference>
<dbReference type="InterPro" id="IPR050137">
    <property type="entry name" value="PyrR_bifunctional"/>
</dbReference>
<dbReference type="NCBIfam" id="NF003548">
    <property type="entry name" value="PRK05205.1-4"/>
    <property type="match status" value="1"/>
</dbReference>
<dbReference type="NCBIfam" id="NF003549">
    <property type="entry name" value="PRK05205.1-5"/>
    <property type="match status" value="1"/>
</dbReference>
<dbReference type="PANTHER" id="PTHR11608">
    <property type="entry name" value="BIFUNCTIONAL PROTEIN PYRR"/>
    <property type="match status" value="1"/>
</dbReference>
<dbReference type="PANTHER" id="PTHR11608:SF0">
    <property type="entry name" value="BIFUNCTIONAL PROTEIN PYRR"/>
    <property type="match status" value="1"/>
</dbReference>
<dbReference type="Pfam" id="PF00156">
    <property type="entry name" value="Pribosyltran"/>
    <property type="match status" value="1"/>
</dbReference>
<dbReference type="SUPFAM" id="SSF53271">
    <property type="entry name" value="PRTase-like"/>
    <property type="match status" value="1"/>
</dbReference>
<reference key="1">
    <citation type="journal article" date="2006" name="Proc. Natl. Acad. Sci. U.S.A.">
        <title>Molecular genetic anatomy of inter- and intraserotype variation in the human bacterial pathogen group A Streptococcus.</title>
        <authorList>
            <person name="Beres S.B."/>
            <person name="Richter E.W."/>
            <person name="Nagiec M.J."/>
            <person name="Sumby P."/>
            <person name="Porcella S.F."/>
            <person name="DeLeo F.R."/>
            <person name="Musser J.M."/>
        </authorList>
    </citation>
    <scope>NUCLEOTIDE SEQUENCE [LARGE SCALE GENOMIC DNA]</scope>
    <source>
        <strain>MGAS2096</strain>
    </source>
</reference>
<keyword id="KW-0328">Glycosyltransferase</keyword>
<keyword id="KW-0694">RNA-binding</keyword>
<keyword id="KW-0804">Transcription</keyword>
<keyword id="KW-0805">Transcription regulation</keyword>
<keyword id="KW-0806">Transcription termination</keyword>
<keyword id="KW-0808">Transferase</keyword>
<gene>
    <name evidence="1" type="primary">pyrR</name>
    <name type="ordered locus">MGAS2096_Spy0706</name>
</gene>
<sequence length="173" mass="19529">MKTKEIVDDVTMKRAITRITYEIIERNKQLDNVVLAGIKTRGVFLARRIQERLHQLEGLDLPIGELDIKPFRDDMRVEEDTTLMSVDITGKDVILIDDVLYTGRTIRAAIDNLVSLGRPARVSLAVLVDRGHRELPIRADYVGKNIPTSSVEEIVVEVVEVDGRDRVSIIDPT</sequence>
<evidence type="ECO:0000255" key="1">
    <source>
        <dbReference type="HAMAP-Rule" id="MF_01219"/>
    </source>
</evidence>
<accession>Q1JCF0</accession>
<feature type="chain" id="PRO_1000053870" description="Bifunctional protein PyrR">
    <location>
        <begin position="1"/>
        <end position="173"/>
    </location>
</feature>
<feature type="short sequence motif" description="PRPP-binding" evidence="1">
    <location>
        <begin position="93"/>
        <end position="105"/>
    </location>
</feature>
<comment type="function">
    <text evidence="1">Regulates transcriptional attenuation of the pyrimidine nucleotide (pyr) operon by binding in a uridine-dependent manner to specific sites on pyr mRNA. This disrupts an antiterminator hairpin in the RNA and favors formation of a downstream transcription terminator, leading to a reduced expression of downstream genes.</text>
</comment>
<comment type="function">
    <text evidence="1">Also displays a weak uracil phosphoribosyltransferase activity which is not physiologically significant.</text>
</comment>
<comment type="catalytic activity">
    <reaction evidence="1">
        <text>UMP + diphosphate = 5-phospho-alpha-D-ribose 1-diphosphate + uracil</text>
        <dbReference type="Rhea" id="RHEA:13017"/>
        <dbReference type="ChEBI" id="CHEBI:17568"/>
        <dbReference type="ChEBI" id="CHEBI:33019"/>
        <dbReference type="ChEBI" id="CHEBI:57865"/>
        <dbReference type="ChEBI" id="CHEBI:58017"/>
        <dbReference type="EC" id="2.4.2.9"/>
    </reaction>
</comment>
<comment type="subunit">
    <text evidence="1">Homodimer and homohexamer; in equilibrium.</text>
</comment>
<comment type="similarity">
    <text evidence="1">Belongs to the purine/pyrimidine phosphoribosyltransferase family. PyrR subfamily.</text>
</comment>
<proteinExistence type="inferred from homology"/>
<organism>
    <name type="scientific">Streptococcus pyogenes serotype M12 (strain MGAS2096)</name>
    <dbReference type="NCBI Taxonomy" id="370553"/>
    <lineage>
        <taxon>Bacteria</taxon>
        <taxon>Bacillati</taxon>
        <taxon>Bacillota</taxon>
        <taxon>Bacilli</taxon>
        <taxon>Lactobacillales</taxon>
        <taxon>Streptococcaceae</taxon>
        <taxon>Streptococcus</taxon>
    </lineage>
</organism>